<dbReference type="EMBL" id="CP000820">
    <property type="protein sequence ID" value="ABW14838.1"/>
    <property type="molecule type" value="Genomic_DNA"/>
</dbReference>
<dbReference type="RefSeq" id="WP_020462946.1">
    <property type="nucleotide sequence ID" value="NC_009921.1"/>
</dbReference>
<dbReference type="STRING" id="298653.Franean1_5483"/>
<dbReference type="KEGG" id="fre:Franean1_5483"/>
<dbReference type="eggNOG" id="COG3002">
    <property type="taxonomic scope" value="Bacteria"/>
</dbReference>
<dbReference type="HOGENOM" id="CLU_009885_0_0_11"/>
<dbReference type="GO" id="GO:0005886">
    <property type="term" value="C:plasma membrane"/>
    <property type="evidence" value="ECO:0007669"/>
    <property type="project" value="UniProtKB-SubCell"/>
</dbReference>
<dbReference type="GO" id="GO:0008270">
    <property type="term" value="F:zinc ion binding"/>
    <property type="evidence" value="ECO:0007669"/>
    <property type="project" value="UniProtKB-UniRule"/>
</dbReference>
<dbReference type="HAMAP" id="MF_01871">
    <property type="entry name" value="DabA"/>
    <property type="match status" value="1"/>
</dbReference>
<dbReference type="InterPro" id="IPR018752">
    <property type="entry name" value="DabA"/>
</dbReference>
<dbReference type="PANTHER" id="PTHR38344:SF1">
    <property type="entry name" value="INORGANIC CARBON TRANSPORTER SUBUNIT DABA-RELATED"/>
    <property type="match status" value="1"/>
</dbReference>
<dbReference type="PANTHER" id="PTHR38344">
    <property type="entry name" value="UPF0753 PROTEIN AQ_863"/>
    <property type="match status" value="1"/>
</dbReference>
<dbReference type="Pfam" id="PF10070">
    <property type="entry name" value="DabA"/>
    <property type="match status" value="1"/>
</dbReference>
<feature type="chain" id="PRO_0000387262" description="Probable inorganic carbon transporter subunit DabA">
    <location>
        <begin position="1"/>
        <end position="1099"/>
    </location>
</feature>
<feature type="region of interest" description="Disordered" evidence="2">
    <location>
        <begin position="175"/>
        <end position="194"/>
    </location>
</feature>
<feature type="region of interest" description="Disordered" evidence="2">
    <location>
        <begin position="1071"/>
        <end position="1099"/>
    </location>
</feature>
<feature type="compositionally biased region" description="Basic residues" evidence="2">
    <location>
        <begin position="176"/>
        <end position="194"/>
    </location>
</feature>
<feature type="binding site" evidence="1">
    <location>
        <position position="514"/>
    </location>
    <ligand>
        <name>Zn(2+)</name>
        <dbReference type="ChEBI" id="CHEBI:29105"/>
    </ligand>
</feature>
<feature type="binding site" evidence="1">
    <location>
        <position position="516"/>
    </location>
    <ligand>
        <name>Zn(2+)</name>
        <dbReference type="ChEBI" id="CHEBI:29105"/>
    </ligand>
</feature>
<feature type="binding site" evidence="1">
    <location>
        <position position="722"/>
    </location>
    <ligand>
        <name>Zn(2+)</name>
        <dbReference type="ChEBI" id="CHEBI:29105"/>
    </ligand>
</feature>
<feature type="binding site" evidence="1">
    <location>
        <position position="737"/>
    </location>
    <ligand>
        <name>Zn(2+)</name>
        <dbReference type="ChEBI" id="CHEBI:29105"/>
    </ligand>
</feature>
<accession>A8L4M3</accession>
<proteinExistence type="inferred from homology"/>
<evidence type="ECO:0000255" key="1">
    <source>
        <dbReference type="HAMAP-Rule" id="MF_01871"/>
    </source>
</evidence>
<evidence type="ECO:0000256" key="2">
    <source>
        <dbReference type="SAM" id="MobiDB-lite"/>
    </source>
</evidence>
<keyword id="KW-1003">Cell membrane</keyword>
<keyword id="KW-0472">Membrane</keyword>
<keyword id="KW-0479">Metal-binding</keyword>
<keyword id="KW-0813">Transport</keyword>
<keyword id="KW-0862">Zinc</keyword>
<gene>
    <name evidence="1" type="primary">dabA</name>
    <name type="ordered locus">Franean1_5483</name>
</gene>
<organism>
    <name type="scientific">Parafrankia sp. (strain EAN1pec)</name>
    <dbReference type="NCBI Taxonomy" id="298653"/>
    <lineage>
        <taxon>Bacteria</taxon>
        <taxon>Bacillati</taxon>
        <taxon>Actinomycetota</taxon>
        <taxon>Actinomycetes</taxon>
        <taxon>Frankiales</taxon>
        <taxon>Frankiaceae</taxon>
        <taxon>Parafrankia</taxon>
    </lineage>
</organism>
<protein>
    <recommendedName>
        <fullName evidence="1">Probable inorganic carbon transporter subunit DabA</fullName>
    </recommendedName>
</protein>
<name>DABA_PARS2</name>
<sequence length="1099" mass="119273">MAYAADQIEMITRIVEEAGELLPPQAPLGYFSHHNPLHALEELPFQRAVEHASAMLGTEALQTEEAFAAHLASGRILPRDLAAVLEHHGDRAGAVPGRHLPVGDQGPRGAGEEMLDGDAEVVPGGPTWNEFRLARLGLFIDVPRGAGALWALADGGELHRVHPLVTEARREELTRQGRRRFATTERRTRRTRRSRAARLQALRARLLAQLWEDLRRHAPPPAPRPAPLRRRDQVLEQFGVDTDEAVHPVLIRLCAAFLDQGVAAWEMPHREKGLLAAFRHLFGTLGAPREACWAGLGGQLRQQLRMNWSAERTVAWALWALQVPVHAWADTVRAALVSLRGWAGMVHQFECRPDRAPSRPAPARLMDYLAVQLTLEVVVSHNVLARLIGPDARPEDLGPLGPPGAAQGVLATGTTAQDDLTQGEQELRGGDLELAYEAFVLAQVMDVETEVLGHPRWARAWLRAVAEFDAGRRRWLLHLAYERRYRTQVLDALSAHDRRFPGTVPPPDFQAVFCMDEREESLRRHLEESHPQVRTYGASGYFGVAMAYQGLDDVRPRALCPVTMTPRSLVVERAVDDGELVAYQRARRRKAQLQHTISAARGRPARAAAYSAIAGLAELVPLAARAVAPRAAGEGVRMLGRREPARPLARLVIEAAQDHTPSTGPAGDGAQAGEAGELVPGVGAGPLRLGFTVEEMAEIVDTLLTTIGMSGPLGPVVFVIGHGSSSVNNPHAAAYDCGATGGGQSGPNARAFAAMANHPRVRAALAHRGRLIGPDTWFVGGHHDTCDSSLAYYDTDLVPAHLRPALTAATDALLTAVQLDAHERCRRFESVGPDVAAGTAHAHVRGRSEDIGQSRPEYGHSTNATCVIGRRSRTRGLYLDRRSFLVSYDPTADPDGAVLTRLLLSAAPVGAGINLEYYFSRIDPIGYGAGSKLPHNITGLVGVMDGHGSDLRTGMPWQSVEIHEPMRLLVIAEAEPERLARIVRENPPLRGLVEGGWIQLAAWDPSGPETYLYRDGAFEQHQPENLRFPVVARSEHYYAGQRDHLPPAHVLAAFGESPDAVIDRPGTVAAAGAGAAQPTRDAIELPEQASGPLPARDGQ</sequence>
<comment type="function">
    <text evidence="1">Part of an energy-coupled inorganic carbon pump.</text>
</comment>
<comment type="cofactor">
    <cofactor evidence="1">
        <name>Zn(2+)</name>
        <dbReference type="ChEBI" id="CHEBI:29105"/>
    </cofactor>
</comment>
<comment type="subunit">
    <text evidence="1">Forms a complex with DabB.</text>
</comment>
<comment type="subcellular location">
    <subcellularLocation>
        <location evidence="1">Cell membrane</location>
        <topology evidence="1">Peripheral membrane protein</topology>
    </subcellularLocation>
</comment>
<comment type="similarity">
    <text evidence="1">Belongs to the inorganic carbon transporter (TC 9.A.2) DabA family.</text>
</comment>
<reference key="1">
    <citation type="journal article" date="2007" name="Genome Res.">
        <title>Genome characteristics of facultatively symbiotic Frankia sp. strains reflect host range and host plant biogeography.</title>
        <authorList>
            <person name="Normand P."/>
            <person name="Lapierre P."/>
            <person name="Tisa L.S."/>
            <person name="Gogarten J.P."/>
            <person name="Alloisio N."/>
            <person name="Bagnarol E."/>
            <person name="Bassi C.A."/>
            <person name="Berry A.M."/>
            <person name="Bickhart D.M."/>
            <person name="Choisne N."/>
            <person name="Couloux A."/>
            <person name="Cournoyer B."/>
            <person name="Cruveiller S."/>
            <person name="Daubin V."/>
            <person name="Demange N."/>
            <person name="Francino M.P."/>
            <person name="Goltsman E."/>
            <person name="Huang Y."/>
            <person name="Kopp O.R."/>
            <person name="Labarre L."/>
            <person name="Lapidus A."/>
            <person name="Lavire C."/>
            <person name="Marechal J."/>
            <person name="Martinez M."/>
            <person name="Mastronunzio J.E."/>
            <person name="Mullin B.C."/>
            <person name="Niemann J."/>
            <person name="Pujic P."/>
            <person name="Rawnsley T."/>
            <person name="Rouy Z."/>
            <person name="Schenowitz C."/>
            <person name="Sellstedt A."/>
            <person name="Tavares F."/>
            <person name="Tomkins J.P."/>
            <person name="Vallenet D."/>
            <person name="Valverde C."/>
            <person name="Wall L.G."/>
            <person name="Wang Y."/>
            <person name="Medigue C."/>
            <person name="Benson D.R."/>
        </authorList>
    </citation>
    <scope>NUCLEOTIDE SEQUENCE [LARGE SCALE GENOMIC DNA]</scope>
    <source>
        <strain>EAN1pec</strain>
    </source>
</reference>